<sequence>MKGDPKVIDYLNKALRHELTAINQYWLHYRLLDNWGIKDLAKKWRAESIE</sequence>
<keyword id="KW-0903">Direct protein sequencing</keyword>
<keyword id="KW-0349">Heme</keyword>
<keyword id="KW-0408">Iron</keyword>
<keyword id="KW-0409">Iron storage</keyword>
<keyword id="KW-0479">Metal-binding</keyword>
<keyword id="KW-0560">Oxidoreductase</keyword>
<proteinExistence type="evidence at protein level"/>
<gene>
    <name type="primary">bfr</name>
</gene>
<feature type="chain" id="PRO_0000192609" description="Bacterioferritin">
    <location>
        <begin position="1"/>
        <end position="50" status="greater than"/>
    </location>
</feature>
<feature type="domain" description="Ferritin-like diiron" evidence="3">
    <location>
        <begin position="1"/>
        <end position="50" status="greater than"/>
    </location>
</feature>
<feature type="binding site" evidence="3">
    <location>
        <position position="18"/>
    </location>
    <ligand>
        <name>Fe cation</name>
        <dbReference type="ChEBI" id="CHEBI:24875"/>
        <label>1</label>
    </ligand>
</feature>
<feature type="non-terminal residue">
    <location>
        <position position="50"/>
    </location>
</feature>
<comment type="function">
    <text evidence="1">Iron-storage protein, whose ferroxidase center binds Fe(2+), oxidizes it using dioxygen to Fe(3+), and participates in the subsequent Fe(3+) oxide mineral core formation within the central cavity of the BFR protein shell.</text>
</comment>
<comment type="function">
    <text>May act as one of the electron carriers in the reverse electron-transport system from cytochrome c-552 to NADP(+).</text>
</comment>
<comment type="catalytic activity">
    <reaction>
        <text>4 Fe(2+) + O2 + 4 H(+) = 4 Fe(3+) + 2 H2O</text>
        <dbReference type="Rhea" id="RHEA:11148"/>
        <dbReference type="ChEBI" id="CHEBI:15377"/>
        <dbReference type="ChEBI" id="CHEBI:15378"/>
        <dbReference type="ChEBI" id="CHEBI:15379"/>
        <dbReference type="ChEBI" id="CHEBI:29033"/>
        <dbReference type="ChEBI" id="CHEBI:29034"/>
        <dbReference type="EC" id="1.16.3.1"/>
    </reaction>
</comment>
<comment type="catalytic activity">
    <reaction evidence="2">
        <text>Fe(2+)(in) = Fe(2+)(out)</text>
        <dbReference type="Rhea" id="RHEA:28486"/>
        <dbReference type="ChEBI" id="CHEBI:29033"/>
    </reaction>
</comment>
<comment type="cofactor">
    <cofactor evidence="1">
        <name>heme b</name>
        <dbReference type="ChEBI" id="CHEBI:60344"/>
    </cofactor>
    <text evidence="1">Binds 1 heme b (iron(II)-protoporphyrin IX) group per dimer.</text>
</comment>
<comment type="subunit">
    <text evidence="1">Homooligomer of 24 subunits, arranged as 12 dimers, that are packed together to form an approximately spherical molecule with a central cavity, in which large amounts of iron can be deposited.</text>
</comment>
<comment type="similarity">
    <text evidence="5">Belongs to the bacterioferritin family.</text>
</comment>
<evidence type="ECO:0000250" key="1"/>
<evidence type="ECO:0000250" key="2">
    <source>
        <dbReference type="UniProtKB" id="Q9HWF9"/>
    </source>
</evidence>
<evidence type="ECO:0000255" key="3">
    <source>
        <dbReference type="PROSITE-ProRule" id="PRU00085"/>
    </source>
</evidence>
<evidence type="ECO:0000303" key="4">
    <source ref="1"/>
</evidence>
<evidence type="ECO:0000305" key="5"/>
<name>BFR_NITWI</name>
<organism>
    <name type="scientific">Nitrobacter winogradskyi</name>
    <name type="common">Nitrobacter agilis</name>
    <dbReference type="NCBI Taxonomy" id="913"/>
    <lineage>
        <taxon>Bacteria</taxon>
        <taxon>Pseudomonadati</taxon>
        <taxon>Pseudomonadota</taxon>
        <taxon>Alphaproteobacteria</taxon>
        <taxon>Hyphomicrobiales</taxon>
        <taxon>Nitrobacteraceae</taxon>
        <taxon>Nitrobacter</taxon>
    </lineage>
</organism>
<accession>P13570</accession>
<reference key="1">
    <citation type="journal article" date="1989" name="Biochim. Biophys. Acta">
        <title>Nitrobacter winogradskyi cytochrome b-559: a nonhaem iron-containing cytochrome related to bacterioferritin.</title>
        <authorList>
            <person name="Kurokawa T."/>
            <person name="Fukumori Y."/>
            <person name="Yamanaka T."/>
        </authorList>
    </citation>
    <scope>PROTEIN SEQUENCE</scope>
    <source>
        <strain>ATCC 14123 / NBRC 14297 / NB-6-2</strain>
    </source>
</reference>
<protein>
    <recommendedName>
        <fullName>Bacterioferritin</fullName>
        <shortName>BFR</shortName>
        <ecNumber>1.16.3.1</ecNumber>
    </recommendedName>
    <alternativeName>
        <fullName evidence="4">Cytochrome b-559</fullName>
    </alternativeName>
</protein>
<dbReference type="EC" id="1.16.3.1"/>
<dbReference type="PIR" id="A37394">
    <property type="entry name" value="A37394"/>
</dbReference>
<dbReference type="SMR" id="P13570"/>
<dbReference type="GO" id="GO:0008199">
    <property type="term" value="F:ferric iron binding"/>
    <property type="evidence" value="ECO:0007669"/>
    <property type="project" value="InterPro"/>
</dbReference>
<dbReference type="GO" id="GO:0004322">
    <property type="term" value="F:ferroxidase activity"/>
    <property type="evidence" value="ECO:0007669"/>
    <property type="project" value="UniProtKB-EC"/>
</dbReference>
<dbReference type="GO" id="GO:0006879">
    <property type="term" value="P:intracellular iron ion homeostasis"/>
    <property type="evidence" value="ECO:0007669"/>
    <property type="project" value="UniProtKB-KW"/>
</dbReference>
<dbReference type="GO" id="GO:0006826">
    <property type="term" value="P:iron ion transport"/>
    <property type="evidence" value="ECO:0007669"/>
    <property type="project" value="InterPro"/>
</dbReference>
<dbReference type="Gene3D" id="1.20.1260.10">
    <property type="match status" value="1"/>
</dbReference>
<dbReference type="InterPro" id="IPR002024">
    <property type="entry name" value="Bacterioferritin"/>
</dbReference>
<dbReference type="InterPro" id="IPR012347">
    <property type="entry name" value="Ferritin-like"/>
</dbReference>
<dbReference type="InterPro" id="IPR009040">
    <property type="entry name" value="Ferritin-like_diiron"/>
</dbReference>
<dbReference type="InterPro" id="IPR009078">
    <property type="entry name" value="Ferritin-like_SF"/>
</dbReference>
<dbReference type="InterPro" id="IPR008331">
    <property type="entry name" value="Ferritin_DPS_dom"/>
</dbReference>
<dbReference type="Pfam" id="PF00210">
    <property type="entry name" value="Ferritin"/>
    <property type="match status" value="1"/>
</dbReference>
<dbReference type="PRINTS" id="PR00601">
    <property type="entry name" value="BACFERRITIN"/>
</dbReference>
<dbReference type="SUPFAM" id="SSF47240">
    <property type="entry name" value="Ferritin-like"/>
    <property type="match status" value="1"/>
</dbReference>
<dbReference type="PROSITE" id="PS00549">
    <property type="entry name" value="BACTERIOFERRITIN"/>
    <property type="match status" value="1"/>
</dbReference>
<dbReference type="PROSITE" id="PS50905">
    <property type="entry name" value="FERRITIN_LIKE"/>
    <property type="match status" value="1"/>
</dbReference>